<proteinExistence type="inferred from homology"/>
<sequence>MRRTLYRLMIELTNGRFTSYILRKFAQSRLSSIIIPSYAKVFQINQDEMEKGLKEYRTLHELFTRKLKEGKRSIDTDASSIVSPVDGVFADYGPIEDAKTFDIKGKRYSIVDMLGNEERAQRYAGGTYMVIYLSPSHYHRIHSPLSGSVTERFVLGRKSYPVNAAGMEYGKEPLSKNYRSVTEVNSDGEHMALVKVGAMFVNSIELLHERDTVQKGEEMAYFTFGSTVVLLFEKDMIEVVQELKSGQELRLGEKIATRLAHK</sequence>
<feature type="chain" id="PRO_1000026538" description="Phosphatidylserine decarboxylase beta chain" evidence="1">
    <location>
        <begin position="1"/>
        <end position="225"/>
    </location>
</feature>
<feature type="chain" id="PRO_1000026539" description="Phosphatidylserine decarboxylase alpha chain" evidence="1">
    <location>
        <begin position="226"/>
        <end position="262"/>
    </location>
</feature>
<feature type="active site" description="Charge relay system; for autoendoproteolytic cleavage activity" evidence="1">
    <location>
        <position position="86"/>
    </location>
</feature>
<feature type="active site" description="Charge relay system; for autoendoproteolytic cleavage activity" evidence="1">
    <location>
        <position position="142"/>
    </location>
</feature>
<feature type="active site" description="Charge relay system; for autoendoproteolytic cleavage activity" evidence="1">
    <location>
        <position position="226"/>
    </location>
</feature>
<feature type="active site" description="Schiff-base intermediate with substrate; via pyruvic acid; for decarboxylase activity" evidence="1">
    <location>
        <position position="226"/>
    </location>
</feature>
<feature type="site" description="Cleavage (non-hydrolytic); by autocatalysis" evidence="1">
    <location>
        <begin position="225"/>
        <end position="226"/>
    </location>
</feature>
<feature type="modified residue" description="Pyruvic acid (Ser); by autocatalysis" evidence="1">
    <location>
        <position position="226"/>
    </location>
</feature>
<name>PSD_BACAH</name>
<keyword id="KW-1003">Cell membrane</keyword>
<keyword id="KW-0210">Decarboxylase</keyword>
<keyword id="KW-0444">Lipid biosynthesis</keyword>
<keyword id="KW-0443">Lipid metabolism</keyword>
<keyword id="KW-0456">Lyase</keyword>
<keyword id="KW-0472">Membrane</keyword>
<keyword id="KW-0594">Phospholipid biosynthesis</keyword>
<keyword id="KW-1208">Phospholipid metabolism</keyword>
<keyword id="KW-0670">Pyruvate</keyword>
<keyword id="KW-0865">Zymogen</keyword>
<gene>
    <name evidence="1" type="primary">psd</name>
    <name type="ordered locus">BALH_3925</name>
</gene>
<organism>
    <name type="scientific">Bacillus thuringiensis (strain Al Hakam)</name>
    <dbReference type="NCBI Taxonomy" id="412694"/>
    <lineage>
        <taxon>Bacteria</taxon>
        <taxon>Bacillati</taxon>
        <taxon>Bacillota</taxon>
        <taxon>Bacilli</taxon>
        <taxon>Bacillales</taxon>
        <taxon>Bacillaceae</taxon>
        <taxon>Bacillus</taxon>
        <taxon>Bacillus cereus group</taxon>
    </lineage>
</organism>
<protein>
    <recommendedName>
        <fullName evidence="1">Phosphatidylserine decarboxylase proenzyme</fullName>
        <ecNumber evidence="1">4.1.1.65</ecNumber>
    </recommendedName>
    <component>
        <recommendedName>
            <fullName evidence="1">Phosphatidylserine decarboxylase alpha chain</fullName>
        </recommendedName>
    </component>
    <component>
        <recommendedName>
            <fullName evidence="1">Phosphatidylserine decarboxylase beta chain</fullName>
        </recommendedName>
    </component>
</protein>
<accession>A0RIV4</accession>
<dbReference type="EC" id="4.1.1.65" evidence="1"/>
<dbReference type="EMBL" id="CP000485">
    <property type="protein sequence ID" value="ABK87147.1"/>
    <property type="molecule type" value="Genomic_DNA"/>
</dbReference>
<dbReference type="RefSeq" id="WP_001255004.1">
    <property type="nucleotide sequence ID" value="NC_008600.1"/>
</dbReference>
<dbReference type="SMR" id="A0RIV4"/>
<dbReference type="KEGG" id="btl:BALH_3925"/>
<dbReference type="HOGENOM" id="CLU_029061_4_0_9"/>
<dbReference type="UniPathway" id="UPA00558">
    <property type="reaction ID" value="UER00616"/>
</dbReference>
<dbReference type="GO" id="GO:0005886">
    <property type="term" value="C:plasma membrane"/>
    <property type="evidence" value="ECO:0007669"/>
    <property type="project" value="UniProtKB-SubCell"/>
</dbReference>
<dbReference type="GO" id="GO:0004609">
    <property type="term" value="F:phosphatidylserine decarboxylase activity"/>
    <property type="evidence" value="ECO:0007669"/>
    <property type="project" value="UniProtKB-UniRule"/>
</dbReference>
<dbReference type="GO" id="GO:0006646">
    <property type="term" value="P:phosphatidylethanolamine biosynthetic process"/>
    <property type="evidence" value="ECO:0007669"/>
    <property type="project" value="UniProtKB-UniRule"/>
</dbReference>
<dbReference type="HAMAP" id="MF_00662">
    <property type="entry name" value="PS_decarb_PSD_B_type1"/>
    <property type="match status" value="1"/>
</dbReference>
<dbReference type="InterPro" id="IPR003817">
    <property type="entry name" value="PS_Dcarbxylase"/>
</dbReference>
<dbReference type="InterPro" id="IPR033177">
    <property type="entry name" value="PSD-B"/>
</dbReference>
<dbReference type="InterPro" id="IPR033178">
    <property type="entry name" value="PSD_type1_pro"/>
</dbReference>
<dbReference type="NCBIfam" id="NF002853">
    <property type="entry name" value="PRK03140.1"/>
    <property type="match status" value="1"/>
</dbReference>
<dbReference type="NCBIfam" id="TIGR00163">
    <property type="entry name" value="PS_decarb"/>
    <property type="match status" value="1"/>
</dbReference>
<dbReference type="PANTHER" id="PTHR10067">
    <property type="entry name" value="PHOSPHATIDYLSERINE DECARBOXYLASE"/>
    <property type="match status" value="1"/>
</dbReference>
<dbReference type="PANTHER" id="PTHR10067:SF6">
    <property type="entry name" value="PHOSPHATIDYLSERINE DECARBOXYLASE PROENZYME, MITOCHONDRIAL"/>
    <property type="match status" value="1"/>
</dbReference>
<dbReference type="Pfam" id="PF02666">
    <property type="entry name" value="PS_Dcarbxylase"/>
    <property type="match status" value="1"/>
</dbReference>
<evidence type="ECO:0000255" key="1">
    <source>
        <dbReference type="HAMAP-Rule" id="MF_00662"/>
    </source>
</evidence>
<reference key="1">
    <citation type="journal article" date="2007" name="J. Bacteriol.">
        <title>The complete genome sequence of Bacillus thuringiensis Al Hakam.</title>
        <authorList>
            <person name="Challacombe J.F."/>
            <person name="Altherr M.R."/>
            <person name="Xie G."/>
            <person name="Bhotika S.S."/>
            <person name="Brown N."/>
            <person name="Bruce D."/>
            <person name="Campbell C.S."/>
            <person name="Campbell M.L."/>
            <person name="Chen J."/>
            <person name="Chertkov O."/>
            <person name="Cleland C."/>
            <person name="Dimitrijevic M."/>
            <person name="Doggett N.A."/>
            <person name="Fawcett J.J."/>
            <person name="Glavina T."/>
            <person name="Goodwin L.A."/>
            <person name="Green L.D."/>
            <person name="Han C.S."/>
            <person name="Hill K.K."/>
            <person name="Hitchcock P."/>
            <person name="Jackson P.J."/>
            <person name="Keim P."/>
            <person name="Kewalramani A.R."/>
            <person name="Longmire J."/>
            <person name="Lucas S."/>
            <person name="Malfatti S."/>
            <person name="Martinez D."/>
            <person name="McMurry K."/>
            <person name="Meincke L.J."/>
            <person name="Misra M."/>
            <person name="Moseman B.L."/>
            <person name="Mundt M."/>
            <person name="Munk A.C."/>
            <person name="Okinaka R.T."/>
            <person name="Parson-Quintana B."/>
            <person name="Reilly L.P."/>
            <person name="Richardson P."/>
            <person name="Robinson D.L."/>
            <person name="Saunders E."/>
            <person name="Tapia R."/>
            <person name="Tesmer J.G."/>
            <person name="Thayer N."/>
            <person name="Thompson L.S."/>
            <person name="Tice H."/>
            <person name="Ticknor L.O."/>
            <person name="Wills P.L."/>
            <person name="Gilna P."/>
            <person name="Brettin T.S."/>
        </authorList>
    </citation>
    <scope>NUCLEOTIDE SEQUENCE [LARGE SCALE GENOMIC DNA]</scope>
    <source>
        <strain>Al Hakam</strain>
    </source>
</reference>
<comment type="function">
    <text evidence="1">Catalyzes the formation of phosphatidylethanolamine (PtdEtn) from phosphatidylserine (PtdSer).</text>
</comment>
<comment type="catalytic activity">
    <reaction evidence="1">
        <text>a 1,2-diacyl-sn-glycero-3-phospho-L-serine + H(+) = a 1,2-diacyl-sn-glycero-3-phosphoethanolamine + CO2</text>
        <dbReference type="Rhea" id="RHEA:20828"/>
        <dbReference type="ChEBI" id="CHEBI:15378"/>
        <dbReference type="ChEBI" id="CHEBI:16526"/>
        <dbReference type="ChEBI" id="CHEBI:57262"/>
        <dbReference type="ChEBI" id="CHEBI:64612"/>
        <dbReference type="EC" id="4.1.1.65"/>
    </reaction>
</comment>
<comment type="cofactor">
    <cofactor evidence="1">
        <name>pyruvate</name>
        <dbReference type="ChEBI" id="CHEBI:15361"/>
    </cofactor>
    <text evidence="1">Binds 1 pyruvoyl group covalently per subunit.</text>
</comment>
<comment type="pathway">
    <text evidence="1">Phospholipid metabolism; phosphatidylethanolamine biosynthesis; phosphatidylethanolamine from CDP-diacylglycerol: step 2/2.</text>
</comment>
<comment type="subunit">
    <text evidence="1">Heterodimer of a large membrane-associated beta subunit and a small pyruvoyl-containing alpha subunit.</text>
</comment>
<comment type="subcellular location">
    <subcellularLocation>
        <location evidence="1">Cell membrane</location>
        <topology evidence="1">Peripheral membrane protein</topology>
    </subcellularLocation>
</comment>
<comment type="PTM">
    <text evidence="1">Is synthesized initially as an inactive proenzyme. Formation of the active enzyme involves a self-maturation process in which the active site pyruvoyl group is generated from an internal serine residue via an autocatalytic post-translational modification. Two non-identical subunits are generated from the proenzyme in this reaction, and the pyruvate is formed at the N-terminus of the alpha chain, which is derived from the carboxyl end of the proenzyme. The autoendoproteolytic cleavage occurs by a canonical serine protease mechanism, in which the side chain hydroxyl group of the serine supplies its oxygen atom to form the C-terminus of the beta chain, while the remainder of the serine residue undergoes an oxidative deamination to produce ammonia and the pyruvoyl prosthetic group on the alpha chain. During this reaction, the Ser that is part of the protease active site of the proenzyme becomes the pyruvoyl prosthetic group, which constitutes an essential element of the active site of the mature decarboxylase.</text>
</comment>
<comment type="similarity">
    <text evidence="1">Belongs to the phosphatidylserine decarboxylase family. PSD-B subfamily. Prokaryotic type I sub-subfamily.</text>
</comment>